<keyword id="KW-0046">Antibiotic resistance</keyword>
<keyword id="KW-0997">Cell inner membrane</keyword>
<keyword id="KW-1003">Cell membrane</keyword>
<keyword id="KW-0133">Cell shape</keyword>
<keyword id="KW-0961">Cell wall biogenesis/degradation</keyword>
<keyword id="KW-0378">Hydrolase</keyword>
<keyword id="KW-0472">Membrane</keyword>
<keyword id="KW-0573">Peptidoglycan synthesis</keyword>
<keyword id="KW-0812">Transmembrane</keyword>
<keyword id="KW-1133">Transmembrane helix</keyword>
<dbReference type="EC" id="3.6.1.27" evidence="1"/>
<dbReference type="EMBL" id="CP001050">
    <property type="protein sequence ID" value="ACF30476.1"/>
    <property type="molecule type" value="Genomic_DNA"/>
</dbReference>
<dbReference type="RefSeq" id="WP_003703069.1">
    <property type="nucleotide sequence ID" value="NC_011035.1"/>
</dbReference>
<dbReference type="SMR" id="B4RQE0"/>
<dbReference type="KEGG" id="ngk:NGK_1837"/>
<dbReference type="HOGENOM" id="CLU_060296_2_0_4"/>
<dbReference type="Proteomes" id="UP000002564">
    <property type="component" value="Chromosome"/>
</dbReference>
<dbReference type="GO" id="GO:0005886">
    <property type="term" value="C:plasma membrane"/>
    <property type="evidence" value="ECO:0007669"/>
    <property type="project" value="UniProtKB-SubCell"/>
</dbReference>
<dbReference type="GO" id="GO:0050380">
    <property type="term" value="F:undecaprenyl-diphosphatase activity"/>
    <property type="evidence" value="ECO:0007669"/>
    <property type="project" value="UniProtKB-UniRule"/>
</dbReference>
<dbReference type="GO" id="GO:0071555">
    <property type="term" value="P:cell wall organization"/>
    <property type="evidence" value="ECO:0007669"/>
    <property type="project" value="UniProtKB-KW"/>
</dbReference>
<dbReference type="GO" id="GO:0009252">
    <property type="term" value="P:peptidoglycan biosynthetic process"/>
    <property type="evidence" value="ECO:0007669"/>
    <property type="project" value="UniProtKB-KW"/>
</dbReference>
<dbReference type="GO" id="GO:0008360">
    <property type="term" value="P:regulation of cell shape"/>
    <property type="evidence" value="ECO:0007669"/>
    <property type="project" value="UniProtKB-KW"/>
</dbReference>
<dbReference type="GO" id="GO:0046677">
    <property type="term" value="P:response to antibiotic"/>
    <property type="evidence" value="ECO:0007669"/>
    <property type="project" value="UniProtKB-UniRule"/>
</dbReference>
<dbReference type="HAMAP" id="MF_01006">
    <property type="entry name" value="Undec_diphosphatase"/>
    <property type="match status" value="1"/>
</dbReference>
<dbReference type="InterPro" id="IPR003824">
    <property type="entry name" value="UppP"/>
</dbReference>
<dbReference type="NCBIfam" id="NF001389">
    <property type="entry name" value="PRK00281.1-2"/>
    <property type="match status" value="1"/>
</dbReference>
<dbReference type="NCBIfam" id="NF001390">
    <property type="entry name" value="PRK00281.1-4"/>
    <property type="match status" value="1"/>
</dbReference>
<dbReference type="NCBIfam" id="TIGR00753">
    <property type="entry name" value="undec_PP_bacA"/>
    <property type="match status" value="1"/>
</dbReference>
<dbReference type="PANTHER" id="PTHR30622">
    <property type="entry name" value="UNDECAPRENYL-DIPHOSPHATASE"/>
    <property type="match status" value="1"/>
</dbReference>
<dbReference type="PANTHER" id="PTHR30622:SF3">
    <property type="entry name" value="UNDECAPRENYL-DIPHOSPHATASE"/>
    <property type="match status" value="1"/>
</dbReference>
<dbReference type="Pfam" id="PF02673">
    <property type="entry name" value="BacA"/>
    <property type="match status" value="1"/>
</dbReference>
<gene>
    <name evidence="1" type="primary">uppP</name>
    <name type="ordered locus">NGK_1837</name>
</gene>
<protein>
    <recommendedName>
        <fullName evidence="1">Undecaprenyl-diphosphatase</fullName>
        <ecNumber evidence="1">3.6.1.27</ecNumber>
    </recommendedName>
    <alternativeName>
        <fullName evidence="1">Bacitracin resistance protein</fullName>
    </alternativeName>
    <alternativeName>
        <fullName evidence="1">Undecaprenyl pyrophosphate phosphatase</fullName>
    </alternativeName>
</protein>
<accession>B4RQE0</accession>
<organism>
    <name type="scientific">Neisseria gonorrhoeae (strain NCCP11945)</name>
    <dbReference type="NCBI Taxonomy" id="521006"/>
    <lineage>
        <taxon>Bacteria</taxon>
        <taxon>Pseudomonadati</taxon>
        <taxon>Pseudomonadota</taxon>
        <taxon>Betaproteobacteria</taxon>
        <taxon>Neisseriales</taxon>
        <taxon>Neisseriaceae</taxon>
        <taxon>Neisseria</taxon>
    </lineage>
</organism>
<reference key="1">
    <citation type="journal article" date="2008" name="J. Bacteriol.">
        <title>Complete genome sequence of Neisseria gonorrhoeae NCCP11945.</title>
        <authorList>
            <person name="Chung G.T."/>
            <person name="Yoo J.S."/>
            <person name="Oh H.B."/>
            <person name="Lee Y.S."/>
            <person name="Cha S.H."/>
            <person name="Kim S.J."/>
            <person name="Yoo C.K."/>
        </authorList>
    </citation>
    <scope>NUCLEOTIDE SEQUENCE [LARGE SCALE GENOMIC DNA]</scope>
    <source>
        <strain>NCCP11945</strain>
    </source>
</reference>
<evidence type="ECO:0000255" key="1">
    <source>
        <dbReference type="HAMAP-Rule" id="MF_01006"/>
    </source>
</evidence>
<proteinExistence type="inferred from homology"/>
<comment type="function">
    <text evidence="1">Catalyzes the dephosphorylation of undecaprenyl diphosphate (UPP). Confers resistance to bacitracin.</text>
</comment>
<comment type="catalytic activity">
    <reaction evidence="1">
        <text>di-trans,octa-cis-undecaprenyl diphosphate + H2O = di-trans,octa-cis-undecaprenyl phosphate + phosphate + H(+)</text>
        <dbReference type="Rhea" id="RHEA:28094"/>
        <dbReference type="ChEBI" id="CHEBI:15377"/>
        <dbReference type="ChEBI" id="CHEBI:15378"/>
        <dbReference type="ChEBI" id="CHEBI:43474"/>
        <dbReference type="ChEBI" id="CHEBI:58405"/>
        <dbReference type="ChEBI" id="CHEBI:60392"/>
        <dbReference type="EC" id="3.6.1.27"/>
    </reaction>
</comment>
<comment type="subcellular location">
    <subcellularLocation>
        <location evidence="1">Cell inner membrane</location>
        <topology evidence="1">Multi-pass membrane protein</topology>
    </subcellularLocation>
</comment>
<comment type="miscellaneous">
    <text>Bacitracin is thought to be involved in the inhibition of peptidoglycan synthesis by sequestering undecaprenyl diphosphate, thereby reducing the pool of lipid carrier available.</text>
</comment>
<comment type="similarity">
    <text evidence="1">Belongs to the UppP family.</text>
</comment>
<name>UPPP_NEIG2</name>
<feature type="chain" id="PRO_1000197384" description="Undecaprenyl-diphosphatase">
    <location>
        <begin position="1"/>
        <end position="273"/>
    </location>
</feature>
<feature type="transmembrane region" description="Helical" evidence="1">
    <location>
        <begin position="13"/>
        <end position="35"/>
    </location>
</feature>
<feature type="transmembrane region" description="Helical" evidence="1">
    <location>
        <begin position="45"/>
        <end position="62"/>
    </location>
</feature>
<feature type="transmembrane region" description="Helical" evidence="1">
    <location>
        <begin position="82"/>
        <end position="102"/>
    </location>
</feature>
<feature type="transmembrane region" description="Helical" evidence="1">
    <location>
        <begin position="108"/>
        <end position="128"/>
    </location>
</feature>
<feature type="transmembrane region" description="Helical" evidence="1">
    <location>
        <begin position="186"/>
        <end position="206"/>
    </location>
</feature>
<feature type="transmembrane region" description="Helical" evidence="1">
    <location>
        <begin position="219"/>
        <end position="239"/>
    </location>
</feature>
<feature type="transmembrane region" description="Helical" evidence="1">
    <location>
        <begin position="250"/>
        <end position="270"/>
    </location>
</feature>
<sequence>MDFLIVLKALMMGLVEGFTEFLPISSTGHLIVFGNLIGFHSNHKVFEIAIQLGAVLAVVFEYRQRFSNVLHGVGKDRKANRFVLNLAIAFIPAAVMGLLFDKQIKEYLFNPLSVAVMLVLGGFFILWVEKRQSRAEPKIADVDALRPIDALMIGVAQVFALVPGTSRSGSTVMGGMFWGIERKTATEFSFFLAVPMMVAATAYDVLKHYRFFTLHDVGLILIGFIAAFVSGLVAVKALLKFVSKKNYIPFAYYRIVFGIVIIILWLSGWISWE</sequence>